<protein>
    <recommendedName>
        <fullName evidence="1">Putative pterin-4-alpha-carbinolamine dehydratase</fullName>
        <shortName evidence="1">PHS</shortName>
        <ecNumber evidence="1">4.2.1.96</ecNumber>
    </recommendedName>
    <alternativeName>
        <fullName evidence="1">4-alpha-hydroxy-tetrahydropterin dehydratase</fullName>
    </alternativeName>
    <alternativeName>
        <fullName evidence="1">Pterin carbinolamine dehydratase</fullName>
        <shortName evidence="1">PCD</shortName>
    </alternativeName>
</protein>
<comment type="catalytic activity">
    <reaction evidence="1">
        <text>(4aS,6R)-4a-hydroxy-L-erythro-5,6,7,8-tetrahydrobiopterin = (6R)-L-erythro-6,7-dihydrobiopterin + H2O</text>
        <dbReference type="Rhea" id="RHEA:11920"/>
        <dbReference type="ChEBI" id="CHEBI:15377"/>
        <dbReference type="ChEBI" id="CHEBI:15642"/>
        <dbReference type="ChEBI" id="CHEBI:43120"/>
        <dbReference type="EC" id="4.2.1.96"/>
    </reaction>
</comment>
<comment type="similarity">
    <text evidence="1">Belongs to the pterin-4-alpha-carbinolamine dehydratase family.</text>
</comment>
<organism>
    <name type="scientific">Azoarcus sp. (strain BH72)</name>
    <dbReference type="NCBI Taxonomy" id="418699"/>
    <lineage>
        <taxon>Bacteria</taxon>
        <taxon>Pseudomonadati</taxon>
        <taxon>Pseudomonadota</taxon>
        <taxon>Betaproteobacteria</taxon>
        <taxon>Rhodocyclales</taxon>
        <taxon>Zoogloeaceae</taxon>
        <taxon>Azoarcus</taxon>
    </lineage>
</organism>
<feature type="chain" id="PRO_1000050405" description="Putative pterin-4-alpha-carbinolamine dehydratase">
    <location>
        <begin position="1"/>
        <end position="117"/>
    </location>
</feature>
<sequence length="117" mass="13010">MLNELSTRKCTPCQGGMPALDRSEAERYLSQAPGWSLADNGSRIERHYSFRDYRSALRFVVDLSQLAEDEGHHPDISFGWGHATVSWQTKKIKGLHENDFIMAAKTDQIAGDGNGSA</sequence>
<proteinExistence type="inferred from homology"/>
<reference key="1">
    <citation type="journal article" date="2006" name="Nat. Biotechnol.">
        <title>Complete genome of the mutualistic, N2-fixing grass endophyte Azoarcus sp. strain BH72.</title>
        <authorList>
            <person name="Krause A."/>
            <person name="Ramakumar A."/>
            <person name="Bartels D."/>
            <person name="Battistoni F."/>
            <person name="Bekel T."/>
            <person name="Boch J."/>
            <person name="Boehm M."/>
            <person name="Friedrich F."/>
            <person name="Hurek T."/>
            <person name="Krause L."/>
            <person name="Linke B."/>
            <person name="McHardy A.C."/>
            <person name="Sarkar A."/>
            <person name="Schneiker S."/>
            <person name="Syed A.A."/>
            <person name="Thauer R."/>
            <person name="Vorhoelter F.-J."/>
            <person name="Weidner S."/>
            <person name="Puehler A."/>
            <person name="Reinhold-Hurek B."/>
            <person name="Kaiser O."/>
            <person name="Goesmann A."/>
        </authorList>
    </citation>
    <scope>NUCLEOTIDE SEQUENCE [LARGE SCALE GENOMIC DNA]</scope>
    <source>
        <strain>BH72</strain>
    </source>
</reference>
<keyword id="KW-0456">Lyase</keyword>
<keyword id="KW-1185">Reference proteome</keyword>
<gene>
    <name type="ordered locus">azo2296</name>
</gene>
<evidence type="ECO:0000255" key="1">
    <source>
        <dbReference type="HAMAP-Rule" id="MF_00434"/>
    </source>
</evidence>
<dbReference type="EC" id="4.2.1.96" evidence="1"/>
<dbReference type="EMBL" id="AM406670">
    <property type="protein sequence ID" value="CAL94913.1"/>
    <property type="molecule type" value="Genomic_DNA"/>
</dbReference>
<dbReference type="RefSeq" id="WP_011766027.1">
    <property type="nucleotide sequence ID" value="NC_008702.1"/>
</dbReference>
<dbReference type="SMR" id="A1K7V8"/>
<dbReference type="STRING" id="62928.azo2296"/>
<dbReference type="KEGG" id="aoa:dqs_2429"/>
<dbReference type="KEGG" id="azo:azo2296"/>
<dbReference type="eggNOG" id="COG2154">
    <property type="taxonomic scope" value="Bacteria"/>
</dbReference>
<dbReference type="HOGENOM" id="CLU_081974_2_2_4"/>
<dbReference type="OrthoDB" id="9794987at2"/>
<dbReference type="Proteomes" id="UP000002588">
    <property type="component" value="Chromosome"/>
</dbReference>
<dbReference type="GO" id="GO:0008124">
    <property type="term" value="F:4-alpha-hydroxytetrahydrobiopterin dehydratase activity"/>
    <property type="evidence" value="ECO:0007669"/>
    <property type="project" value="UniProtKB-UniRule"/>
</dbReference>
<dbReference type="GO" id="GO:0006729">
    <property type="term" value="P:tetrahydrobiopterin biosynthetic process"/>
    <property type="evidence" value="ECO:0007669"/>
    <property type="project" value="InterPro"/>
</dbReference>
<dbReference type="CDD" id="cd00913">
    <property type="entry name" value="PCD_DCoH_subfamily_a"/>
    <property type="match status" value="1"/>
</dbReference>
<dbReference type="Gene3D" id="3.30.1360.20">
    <property type="entry name" value="Transcriptional coactivator/pterin dehydratase"/>
    <property type="match status" value="1"/>
</dbReference>
<dbReference type="HAMAP" id="MF_00434">
    <property type="entry name" value="Pterin_4_alpha"/>
    <property type="match status" value="1"/>
</dbReference>
<dbReference type="InterPro" id="IPR036428">
    <property type="entry name" value="PCD_sf"/>
</dbReference>
<dbReference type="InterPro" id="IPR050376">
    <property type="entry name" value="Pterin-4-alpha-carb_dehyd"/>
</dbReference>
<dbReference type="InterPro" id="IPR001533">
    <property type="entry name" value="Pterin_deHydtase"/>
</dbReference>
<dbReference type="PANTHER" id="PTHR42805">
    <property type="entry name" value="PTERIN-4-ALPHA-CARBINOLAMINE DEHYDRATASE-RELATED"/>
    <property type="match status" value="1"/>
</dbReference>
<dbReference type="PANTHER" id="PTHR42805:SF1">
    <property type="entry name" value="PTERIN-4-ALPHA-CARBINOLAMINE DEHYDRATASE-RELATED"/>
    <property type="match status" value="1"/>
</dbReference>
<dbReference type="Pfam" id="PF01329">
    <property type="entry name" value="Pterin_4a"/>
    <property type="match status" value="1"/>
</dbReference>
<dbReference type="SUPFAM" id="SSF55248">
    <property type="entry name" value="PCD-like"/>
    <property type="match status" value="1"/>
</dbReference>
<accession>A1K7V8</accession>
<name>PHS_AZOSB</name>